<organism>
    <name type="scientific">Methanothermobacter thermautotrophicus (strain ATCC 29096 / DSM 1053 / JCM 10044 / NBRC 100330 / Delta H)</name>
    <name type="common">Methanobacterium thermoautotrophicum</name>
    <dbReference type="NCBI Taxonomy" id="187420"/>
    <lineage>
        <taxon>Archaea</taxon>
        <taxon>Methanobacteriati</taxon>
        <taxon>Methanobacteriota</taxon>
        <taxon>Methanomada group</taxon>
        <taxon>Methanobacteria</taxon>
        <taxon>Methanobacteriales</taxon>
        <taxon>Methanobacteriaceae</taxon>
        <taxon>Methanothermobacter</taxon>
    </lineage>
</organism>
<comment type="function">
    <text evidence="1 2">Part of ribonuclease P, a protein complex that generates mature tRNA molecules by cleaving their 5'-ends.</text>
</comment>
<comment type="catalytic activity">
    <reaction evidence="1">
        <text>Endonucleolytic cleavage of RNA, removing 5'-extranucleotides from tRNA precursor.</text>
        <dbReference type="EC" id="3.1.26.5"/>
    </reaction>
</comment>
<comment type="subunit">
    <text evidence="1 2">Consists of a catalytic RNA component and at least 4-5 protein subunits.</text>
</comment>
<comment type="subcellular location">
    <subcellularLocation>
        <location evidence="1">Cytoplasm</location>
    </subcellularLocation>
</comment>
<comment type="induction">
    <text evidence="2">Constitutively expressed (at protein level).</text>
</comment>
<comment type="similarity">
    <text evidence="1">Belongs to the eukaryotic/archaeal RNase P protein component 3 family.</text>
</comment>
<accession>O26784</accession>
<keyword id="KW-0963">Cytoplasm</keyword>
<keyword id="KW-0255">Endonuclease</keyword>
<keyword id="KW-0378">Hydrolase</keyword>
<keyword id="KW-0540">Nuclease</keyword>
<keyword id="KW-1185">Reference proteome</keyword>
<keyword id="KW-0819">tRNA processing</keyword>
<name>RNP3_METTH</name>
<protein>
    <recommendedName>
        <fullName evidence="1">Ribonuclease P protein component 3</fullName>
        <shortName evidence="1">RNase P component 3</shortName>
        <ecNumber evidence="1">3.1.26.5</ecNumber>
    </recommendedName>
    <alternativeName>
        <fullName evidence="1">Rpp30</fullName>
    </alternativeName>
</protein>
<feature type="chain" id="PRO_0000140043" description="Ribonuclease P protein component 3">
    <location>
        <begin position="1"/>
        <end position="245"/>
    </location>
</feature>
<evidence type="ECO:0000255" key="1">
    <source>
        <dbReference type="HAMAP-Rule" id="MF_00756"/>
    </source>
</evidence>
<evidence type="ECO:0000269" key="2">
    <source>
    </source>
</evidence>
<proteinExistence type="evidence at protein level"/>
<dbReference type="EC" id="3.1.26.5" evidence="1"/>
<dbReference type="EMBL" id="AE000666">
    <property type="protein sequence ID" value="AAB85193.1"/>
    <property type="molecule type" value="Genomic_DNA"/>
</dbReference>
<dbReference type="PIR" id="F69191">
    <property type="entry name" value="F69191"/>
</dbReference>
<dbReference type="SMR" id="O26784"/>
<dbReference type="IntAct" id="O26784">
    <property type="interactions" value="1"/>
</dbReference>
<dbReference type="STRING" id="187420.MTH_688"/>
<dbReference type="PaxDb" id="187420-MTH_688"/>
<dbReference type="EnsemblBacteria" id="AAB85193">
    <property type="protein sequence ID" value="AAB85193"/>
    <property type="gene ID" value="MTH_688"/>
</dbReference>
<dbReference type="KEGG" id="mth:MTH_688"/>
<dbReference type="HOGENOM" id="CLU_074509_0_0_2"/>
<dbReference type="InParanoid" id="O26784"/>
<dbReference type="Proteomes" id="UP000005223">
    <property type="component" value="Chromosome"/>
</dbReference>
<dbReference type="GO" id="GO:0005737">
    <property type="term" value="C:cytoplasm"/>
    <property type="evidence" value="ECO:0007669"/>
    <property type="project" value="UniProtKB-SubCell"/>
</dbReference>
<dbReference type="GO" id="GO:0030677">
    <property type="term" value="C:ribonuclease P complex"/>
    <property type="evidence" value="ECO:0007669"/>
    <property type="project" value="UniProtKB-UniRule"/>
</dbReference>
<dbReference type="GO" id="GO:0004526">
    <property type="term" value="F:ribonuclease P activity"/>
    <property type="evidence" value="ECO:0007669"/>
    <property type="project" value="UniProtKB-UniRule"/>
</dbReference>
<dbReference type="GO" id="GO:0003723">
    <property type="term" value="F:RNA binding"/>
    <property type="evidence" value="ECO:0007669"/>
    <property type="project" value="TreeGrafter"/>
</dbReference>
<dbReference type="GO" id="GO:0001682">
    <property type="term" value="P:tRNA 5'-leader removal"/>
    <property type="evidence" value="ECO:0007669"/>
    <property type="project" value="UniProtKB-UniRule"/>
</dbReference>
<dbReference type="Gene3D" id="3.20.20.140">
    <property type="entry name" value="Metal-dependent hydrolases"/>
    <property type="match status" value="1"/>
</dbReference>
<dbReference type="HAMAP" id="MF_00756">
    <property type="entry name" value="RNase_P_3"/>
    <property type="match status" value="1"/>
</dbReference>
<dbReference type="InterPro" id="IPR016195">
    <property type="entry name" value="Pol/histidinol_Pase-like"/>
</dbReference>
<dbReference type="InterPro" id="IPR023539">
    <property type="entry name" value="RNase_P_comp-3_arc"/>
</dbReference>
<dbReference type="InterPro" id="IPR002738">
    <property type="entry name" value="RNase_P_p30"/>
</dbReference>
<dbReference type="NCBIfam" id="NF046111">
    <property type="entry name" value="RNaseP3Mthb"/>
    <property type="match status" value="1"/>
</dbReference>
<dbReference type="PANTHER" id="PTHR13031:SF0">
    <property type="entry name" value="RIBONUCLEASE P PROTEIN SUBUNIT P30"/>
    <property type="match status" value="1"/>
</dbReference>
<dbReference type="PANTHER" id="PTHR13031">
    <property type="entry name" value="RIBONUCLEASE P SUBUNIT P30"/>
    <property type="match status" value="1"/>
</dbReference>
<dbReference type="Pfam" id="PF01876">
    <property type="entry name" value="RNase_P_p30"/>
    <property type="match status" value="1"/>
</dbReference>
<dbReference type="SUPFAM" id="SSF89550">
    <property type="entry name" value="PHP domain-like"/>
    <property type="match status" value="1"/>
</dbReference>
<sequence length="245" mass="27680">MIPQRILMKFFDFHIQGRDHDSSLRLLLEASRLGYQGGVLVYPSERYPDLKSDLESLRENPELQDFEIARGVMINASDPRDMRRSVNKFRKKADVIYVSGGNLKVNRAACESRRVDVLSAPYTSRRDPGINHVLAREAARNNVAVELPLADVIGSWLKVRARVLEQFREILKLHRKFGFPLLLTSRASSIYDLRTPGDIMNLAECFGMESSEAEESLTSTPASILEDSGNRHLLIAEGVRLLPES</sequence>
<reference key="1">
    <citation type="journal article" date="1997" name="J. Bacteriol.">
        <title>Complete genome sequence of Methanobacterium thermoautotrophicum deltaH: functional analysis and comparative genomics.</title>
        <authorList>
            <person name="Smith D.R."/>
            <person name="Doucette-Stamm L.A."/>
            <person name="Deloughery C."/>
            <person name="Lee H.-M."/>
            <person name="Dubois J."/>
            <person name="Aldredge T."/>
            <person name="Bashirzadeh R."/>
            <person name="Blakely D."/>
            <person name="Cook R."/>
            <person name="Gilbert K."/>
            <person name="Harrison D."/>
            <person name="Hoang L."/>
            <person name="Keagle P."/>
            <person name="Lumm W."/>
            <person name="Pothier B."/>
            <person name="Qiu D."/>
            <person name="Spadafora R."/>
            <person name="Vicare R."/>
            <person name="Wang Y."/>
            <person name="Wierzbowski J."/>
            <person name="Gibson R."/>
            <person name="Jiwani N."/>
            <person name="Caruso A."/>
            <person name="Bush D."/>
            <person name="Safer H."/>
            <person name="Patwell D."/>
            <person name="Prabhakar S."/>
            <person name="McDougall S."/>
            <person name="Shimer G."/>
            <person name="Goyal A."/>
            <person name="Pietrovski S."/>
            <person name="Church G.M."/>
            <person name="Daniels C.J."/>
            <person name="Mao J.-I."/>
            <person name="Rice P."/>
            <person name="Noelling J."/>
            <person name="Reeve J.N."/>
        </authorList>
    </citation>
    <scope>NUCLEOTIDE SEQUENCE [LARGE SCALE GENOMIC DNA]</scope>
    <source>
        <strain>ATCC 29096 / DSM 1053 / JCM 10044 / NBRC 100330 / Delta H</strain>
    </source>
</reference>
<reference key="2">
    <citation type="journal article" date="2002" name="RNA">
        <title>Archaeal RNase P has multiple protein subunits homologous to eukaryotic nuclear RNase P proteins.</title>
        <authorList>
            <person name="Hall T.A."/>
            <person name="Brown J.W."/>
        </authorList>
    </citation>
    <scope>FUNCTION</scope>
    <scope>SUBUNIT</scope>
    <scope>INDUCTION</scope>
    <source>
        <strain>ATCC 29096 / DSM 1053 / JCM 10044 / NBRC 100330 / Delta H</strain>
    </source>
</reference>
<gene>
    <name evidence="1" type="primary">rnp3</name>
    <name type="ordered locus">MTH_688</name>
</gene>